<comment type="function">
    <text evidence="1">Scaffolding protein involved in the icosahedric procapsid assembly. Coassembles with the capsid proteins to form the procapsid, in which the scaffolding protein is found within the external shell of icosahedrally arranged capsid protein subunits. In a subsequent step the scaffolding protein molecules are released from the procapsid.</text>
</comment>
<comment type="subunit">
    <text evidence="1">Homodimer.</text>
</comment>
<comment type="similarity">
    <text evidence="2">Belongs to the SPP1-like scaffolding protein family.</text>
</comment>
<accession>Q04764</accession>
<organism>
    <name type="scientific">Lactococcus phage mv4</name>
    <name type="common">Lactococcus delbrueckii bacteriophage mv4</name>
    <dbReference type="NCBI Taxonomy" id="12392"/>
    <lineage>
        <taxon>Viruses</taxon>
    </lineage>
</organism>
<evidence type="ECO:0000250" key="1">
    <source>
        <dbReference type="UniProtKB" id="Q38580"/>
    </source>
</evidence>
<evidence type="ECO:0000305" key="2"/>
<protein>
    <recommendedName>
        <fullName>Capsid assembly scaffolding protein</fullName>
    </recommendedName>
    <alternativeName>
        <fullName>Head morphogenesis protein</fullName>
    </alternativeName>
    <alternativeName>
        <fullName>Minor structural protein Gp20</fullName>
    </alternativeName>
    <alternativeName>
        <fullName>ORF2 protein</fullName>
    </alternativeName>
    <alternativeName>
        <fullName>Scaffold protein</fullName>
    </alternativeName>
</protein>
<feature type="chain" id="PRO_0000065790" description="Capsid assembly scaffolding protein">
    <location>
        <begin position="1"/>
        <end position="180"/>
    </location>
</feature>
<organismHost>
    <name type="scientific">Lactobacillus delbrueckii</name>
    <dbReference type="NCBI Taxonomy" id="1584"/>
</organismHost>
<reference key="1">
    <citation type="journal article" date="1993" name="J. Virol.">
        <title>Molecular comparison of the structural proteins encoding gene clusters of two related Lactobacillus delbrueckii bacteriophages.</title>
        <authorList>
            <person name="Vasala A."/>
            <person name="Dupont L."/>
            <person name="Baumann M."/>
            <person name="Ritzenthaler P."/>
            <person name="Alatossava T."/>
        </authorList>
    </citation>
    <scope>NUCLEOTIDE SEQUENCE [GENOMIC DNA]</scope>
</reference>
<proteinExistence type="inferred from homology"/>
<dbReference type="EMBL" id="L02497">
    <property type="protein sequence ID" value="AAA56847.1"/>
    <property type="molecule type" value="Genomic_DNA"/>
</dbReference>
<dbReference type="PIR" id="G45691">
    <property type="entry name" value="G45691"/>
</dbReference>
<dbReference type="SMR" id="Q04764"/>
<dbReference type="GO" id="GO:0019069">
    <property type="term" value="P:viral capsid assembly"/>
    <property type="evidence" value="ECO:0007669"/>
    <property type="project" value="InterPro"/>
</dbReference>
<dbReference type="InterPro" id="IPR009636">
    <property type="entry name" value="SCAF"/>
</dbReference>
<dbReference type="Pfam" id="PF06810">
    <property type="entry name" value="Phage_scaffold"/>
    <property type="match status" value="1"/>
</dbReference>
<sequence length="180" mass="20102">MERKFLTDLGLNPDQVNSIMAQYGKDMQKYEGLEAERDALKKTSSELSNKIEDLKANSANIEDLTKQIEKLKLDNENATKQLSAQKLDFAVTSTIKDFGAKNAKAVKALLNHDDIRFDSKGNLTGLEEQLKSLKDSDSYLFAEDKPAGKPIQAFLRGTGSWRQGCQPASEDCTKIERINK</sequence>
<keyword id="KW-0118">Viral capsid assembly</keyword>
<keyword id="KW-1188">Viral release from host cell</keyword>
<gene>
    <name type="primary">g20</name>
</gene>
<name>SCAF_BPMV4</name>